<reference key="1">
    <citation type="journal article" date="2005" name="Science">
        <title>The transcriptional landscape of the mammalian genome.</title>
        <authorList>
            <person name="Carninci P."/>
            <person name="Kasukawa T."/>
            <person name="Katayama S."/>
            <person name="Gough J."/>
            <person name="Frith M.C."/>
            <person name="Maeda N."/>
            <person name="Oyama R."/>
            <person name="Ravasi T."/>
            <person name="Lenhard B."/>
            <person name="Wells C."/>
            <person name="Kodzius R."/>
            <person name="Shimokawa K."/>
            <person name="Bajic V.B."/>
            <person name="Brenner S.E."/>
            <person name="Batalov S."/>
            <person name="Forrest A.R."/>
            <person name="Zavolan M."/>
            <person name="Davis M.J."/>
            <person name="Wilming L.G."/>
            <person name="Aidinis V."/>
            <person name="Allen J.E."/>
            <person name="Ambesi-Impiombato A."/>
            <person name="Apweiler R."/>
            <person name="Aturaliya R.N."/>
            <person name="Bailey T.L."/>
            <person name="Bansal M."/>
            <person name="Baxter L."/>
            <person name="Beisel K.W."/>
            <person name="Bersano T."/>
            <person name="Bono H."/>
            <person name="Chalk A.M."/>
            <person name="Chiu K.P."/>
            <person name="Choudhary V."/>
            <person name="Christoffels A."/>
            <person name="Clutterbuck D.R."/>
            <person name="Crowe M.L."/>
            <person name="Dalla E."/>
            <person name="Dalrymple B.P."/>
            <person name="de Bono B."/>
            <person name="Della Gatta G."/>
            <person name="di Bernardo D."/>
            <person name="Down T."/>
            <person name="Engstrom P."/>
            <person name="Fagiolini M."/>
            <person name="Faulkner G."/>
            <person name="Fletcher C.F."/>
            <person name="Fukushima T."/>
            <person name="Furuno M."/>
            <person name="Futaki S."/>
            <person name="Gariboldi M."/>
            <person name="Georgii-Hemming P."/>
            <person name="Gingeras T.R."/>
            <person name="Gojobori T."/>
            <person name="Green R.E."/>
            <person name="Gustincich S."/>
            <person name="Harbers M."/>
            <person name="Hayashi Y."/>
            <person name="Hensch T.K."/>
            <person name="Hirokawa N."/>
            <person name="Hill D."/>
            <person name="Huminiecki L."/>
            <person name="Iacono M."/>
            <person name="Ikeo K."/>
            <person name="Iwama A."/>
            <person name="Ishikawa T."/>
            <person name="Jakt M."/>
            <person name="Kanapin A."/>
            <person name="Katoh M."/>
            <person name="Kawasawa Y."/>
            <person name="Kelso J."/>
            <person name="Kitamura H."/>
            <person name="Kitano H."/>
            <person name="Kollias G."/>
            <person name="Krishnan S.P."/>
            <person name="Kruger A."/>
            <person name="Kummerfeld S.K."/>
            <person name="Kurochkin I.V."/>
            <person name="Lareau L.F."/>
            <person name="Lazarevic D."/>
            <person name="Lipovich L."/>
            <person name="Liu J."/>
            <person name="Liuni S."/>
            <person name="McWilliam S."/>
            <person name="Madan Babu M."/>
            <person name="Madera M."/>
            <person name="Marchionni L."/>
            <person name="Matsuda H."/>
            <person name="Matsuzawa S."/>
            <person name="Miki H."/>
            <person name="Mignone F."/>
            <person name="Miyake S."/>
            <person name="Morris K."/>
            <person name="Mottagui-Tabar S."/>
            <person name="Mulder N."/>
            <person name="Nakano N."/>
            <person name="Nakauchi H."/>
            <person name="Ng P."/>
            <person name="Nilsson R."/>
            <person name="Nishiguchi S."/>
            <person name="Nishikawa S."/>
            <person name="Nori F."/>
            <person name="Ohara O."/>
            <person name="Okazaki Y."/>
            <person name="Orlando V."/>
            <person name="Pang K.C."/>
            <person name="Pavan W.J."/>
            <person name="Pavesi G."/>
            <person name="Pesole G."/>
            <person name="Petrovsky N."/>
            <person name="Piazza S."/>
            <person name="Reed J."/>
            <person name="Reid J.F."/>
            <person name="Ring B.Z."/>
            <person name="Ringwald M."/>
            <person name="Rost B."/>
            <person name="Ruan Y."/>
            <person name="Salzberg S.L."/>
            <person name="Sandelin A."/>
            <person name="Schneider C."/>
            <person name="Schoenbach C."/>
            <person name="Sekiguchi K."/>
            <person name="Semple C.A."/>
            <person name="Seno S."/>
            <person name="Sessa L."/>
            <person name="Sheng Y."/>
            <person name="Shibata Y."/>
            <person name="Shimada H."/>
            <person name="Shimada K."/>
            <person name="Silva D."/>
            <person name="Sinclair B."/>
            <person name="Sperling S."/>
            <person name="Stupka E."/>
            <person name="Sugiura K."/>
            <person name="Sultana R."/>
            <person name="Takenaka Y."/>
            <person name="Taki K."/>
            <person name="Tammoja K."/>
            <person name="Tan S.L."/>
            <person name="Tang S."/>
            <person name="Taylor M.S."/>
            <person name="Tegner J."/>
            <person name="Teichmann S.A."/>
            <person name="Ueda H.R."/>
            <person name="van Nimwegen E."/>
            <person name="Verardo R."/>
            <person name="Wei C.L."/>
            <person name="Yagi K."/>
            <person name="Yamanishi H."/>
            <person name="Zabarovsky E."/>
            <person name="Zhu S."/>
            <person name="Zimmer A."/>
            <person name="Hide W."/>
            <person name="Bult C."/>
            <person name="Grimmond S.M."/>
            <person name="Teasdale R.D."/>
            <person name="Liu E.T."/>
            <person name="Brusic V."/>
            <person name="Quackenbush J."/>
            <person name="Wahlestedt C."/>
            <person name="Mattick J.S."/>
            <person name="Hume D.A."/>
            <person name="Kai C."/>
            <person name="Sasaki D."/>
            <person name="Tomaru Y."/>
            <person name="Fukuda S."/>
            <person name="Kanamori-Katayama M."/>
            <person name="Suzuki M."/>
            <person name="Aoki J."/>
            <person name="Arakawa T."/>
            <person name="Iida J."/>
            <person name="Imamura K."/>
            <person name="Itoh M."/>
            <person name="Kato T."/>
            <person name="Kawaji H."/>
            <person name="Kawagashira N."/>
            <person name="Kawashima T."/>
            <person name="Kojima M."/>
            <person name="Kondo S."/>
            <person name="Konno H."/>
            <person name="Nakano K."/>
            <person name="Ninomiya N."/>
            <person name="Nishio T."/>
            <person name="Okada M."/>
            <person name="Plessy C."/>
            <person name="Shibata K."/>
            <person name="Shiraki T."/>
            <person name="Suzuki S."/>
            <person name="Tagami M."/>
            <person name="Waki K."/>
            <person name="Watahiki A."/>
            <person name="Okamura-Oho Y."/>
            <person name="Suzuki H."/>
            <person name="Kawai J."/>
            <person name="Hayashizaki Y."/>
        </authorList>
    </citation>
    <scope>NUCLEOTIDE SEQUENCE [LARGE SCALE MRNA] (ISOFORMS 1 AND 2)</scope>
    <source>
        <strain>C57BL/6J</strain>
        <tissue>Cerebellum</tissue>
        <tissue>Embryonic heart</tissue>
    </source>
</reference>
<reference key="2">
    <citation type="journal article" date="2009" name="PLoS Biol.">
        <title>Lineage-specific biology revealed by a finished genome assembly of the mouse.</title>
        <authorList>
            <person name="Church D.M."/>
            <person name="Goodstadt L."/>
            <person name="Hillier L.W."/>
            <person name="Zody M.C."/>
            <person name="Goldstein S."/>
            <person name="She X."/>
            <person name="Bult C.J."/>
            <person name="Agarwala R."/>
            <person name="Cherry J.L."/>
            <person name="DiCuccio M."/>
            <person name="Hlavina W."/>
            <person name="Kapustin Y."/>
            <person name="Meric P."/>
            <person name="Maglott D."/>
            <person name="Birtle Z."/>
            <person name="Marques A.C."/>
            <person name="Graves T."/>
            <person name="Zhou S."/>
            <person name="Teague B."/>
            <person name="Potamousis K."/>
            <person name="Churas C."/>
            <person name="Place M."/>
            <person name="Herschleb J."/>
            <person name="Runnheim R."/>
            <person name="Forrest D."/>
            <person name="Amos-Landgraf J."/>
            <person name="Schwartz D.C."/>
            <person name="Cheng Z."/>
            <person name="Lindblad-Toh K."/>
            <person name="Eichler E.E."/>
            <person name="Ponting C.P."/>
        </authorList>
    </citation>
    <scope>NUCLEOTIDE SEQUENCE [LARGE SCALE GENOMIC DNA]</scope>
    <source>
        <strain>C57BL/6J</strain>
    </source>
</reference>
<reference key="3">
    <citation type="submission" date="2005-07" db="EMBL/GenBank/DDBJ databases">
        <authorList>
            <person name="Mural R.J."/>
            <person name="Adams M.D."/>
            <person name="Myers E.W."/>
            <person name="Smith H.O."/>
            <person name="Venter J.C."/>
        </authorList>
    </citation>
    <scope>NUCLEOTIDE SEQUENCE [LARGE SCALE GENOMIC DNA]</scope>
</reference>
<reference key="4">
    <citation type="journal article" date="2004" name="Genome Res.">
        <title>The status, quality, and expansion of the NIH full-length cDNA project: the Mammalian Gene Collection (MGC).</title>
        <authorList>
            <consortium name="The MGC Project Team"/>
        </authorList>
    </citation>
    <scope>NUCLEOTIDE SEQUENCE [LARGE SCALE MRNA] (ISOFORMS 4 AND 5)</scope>
    <source>
        <strain>C57BL/6J</strain>
        <tissue>Retina</tissue>
    </source>
</reference>
<reference key="5">
    <citation type="submission" date="2009-01" db="UniProtKB">
        <authorList>
            <person name="Lubec G."/>
            <person name="Sunyer B."/>
            <person name="Chen W.-Q."/>
        </authorList>
    </citation>
    <scope>PROTEIN SEQUENCE OF 46-63</scope>
    <scope>IDENTIFICATION BY MASS SPECTROMETRY</scope>
    <source>
        <strain>OF1</strain>
        <tissue>Hippocampus</tissue>
    </source>
</reference>
<reference key="6">
    <citation type="submission" date="1993-09" db="EMBL/GenBank/DDBJ databases">
        <title>Subtractive cloning of murine erythroleukemia mRNAs.</title>
        <authorList>
            <person name="Miller I.J."/>
            <person name="Bieker J.J."/>
        </authorList>
    </citation>
    <scope>NUCLEOTIDE SEQUENCE [MRNA] OF 419-673</scope>
    <source>
        <tissue>Erythroleukemia</tissue>
    </source>
</reference>
<reference key="7">
    <citation type="journal article" date="2003" name="J. Biol. Chem.">
        <title>Interaction of activator of G-protein signaling 3 (AGS3) with LKB1, a serine/threonine kinase involved in cell polarity and cell cycle progression: phosphorylation of the G-protein regulatory (GPR) motif as a regulatory mechanism for the interaction of GPR motifs with Gi alpha.</title>
        <authorList>
            <person name="Blumer J.B."/>
            <person name="Bernard M.L."/>
            <person name="Peterson Y.K."/>
            <person name="Nezu J."/>
            <person name="Chung P."/>
            <person name="Dunican D.J."/>
            <person name="Knoblich J.A."/>
            <person name="Lanier S.M."/>
        </authorList>
    </citation>
    <scope>INTERACTION WITH STK11/LKB1 AND MACF1</scope>
    <scope>PHOSPHORYLATION</scope>
</reference>
<reference key="8">
    <citation type="journal article" date="2004" name="Mol. Cell. Proteomics">
        <title>Phosphoproteomic analysis of the developing mouse brain.</title>
        <authorList>
            <person name="Ballif B.A."/>
            <person name="Villen J."/>
            <person name="Beausoleil S.A."/>
            <person name="Schwartz D."/>
            <person name="Gygi S.P."/>
        </authorList>
    </citation>
    <scope>PHOSPHORYLATION [LARGE SCALE ANALYSIS] AT SER-653</scope>
    <scope>IDENTIFICATION BY MASS SPECTROMETRY [LARGE SCALE ANALYSIS]</scope>
    <source>
        <tissue>Embryonic brain</tissue>
    </source>
</reference>
<reference key="9">
    <citation type="journal article" date="2005" name="Cell">
        <title>G protein betagamma subunits and AGS3 control spindle orientation and asymmetric cell fate of cerebral cortical progenitors.</title>
        <authorList>
            <person name="Sanada K."/>
            <person name="Tsai L.-H."/>
        </authorList>
    </citation>
    <scope>FUNCTION</scope>
    <scope>TISSUE SPECIFICITY</scope>
    <scope>DEVELOPMENTAL STAGE</scope>
    <scope>INTERACTION WITH GNAI3</scope>
</reference>
<reference key="10">
    <citation type="journal article" date="2010" name="Cell">
        <title>A tissue-specific atlas of mouse protein phosphorylation and expression.</title>
        <authorList>
            <person name="Huttlin E.L."/>
            <person name="Jedrychowski M.P."/>
            <person name="Elias J.E."/>
            <person name="Goswami T."/>
            <person name="Rad R."/>
            <person name="Beausoleil S.A."/>
            <person name="Villen J."/>
            <person name="Haas W."/>
            <person name="Sowa M.E."/>
            <person name="Gygi S.P."/>
        </authorList>
    </citation>
    <scope>PHOSPHORYLATION [LARGE SCALE ANALYSIS] AT SER-410; SER-490 AND SER-491</scope>
    <scope>IDENTIFICATION BY MASS SPECTROMETRY [LARGE SCALE ANALYSIS]</scope>
    <source>
        <tissue>Brain</tissue>
        <tissue>Heart</tissue>
        <tissue>Kidney</tissue>
        <tissue>Lung</tissue>
        <tissue>Pancreas</tissue>
        <tissue>Spleen</tissue>
        <tissue>Testis</tissue>
    </source>
</reference>
<reference key="11">
    <citation type="journal article" date="2014" name="Mol. Cell. Proteomics">
        <title>Immunoaffinity enrichment and mass spectrometry analysis of protein methylation.</title>
        <authorList>
            <person name="Guo A."/>
            <person name="Gu H."/>
            <person name="Zhou J."/>
            <person name="Mulhern D."/>
            <person name="Wang Y."/>
            <person name="Lee K.A."/>
            <person name="Yang V."/>
            <person name="Aguiar M."/>
            <person name="Kornhauser J."/>
            <person name="Jia X."/>
            <person name="Ren J."/>
            <person name="Beausoleil S.A."/>
            <person name="Silva J.C."/>
            <person name="Vemulapalli V."/>
            <person name="Bedford M.T."/>
            <person name="Comb M.J."/>
        </authorList>
    </citation>
    <scope>METHYLATION [LARGE SCALE ANALYSIS] AT ARG-418</scope>
    <scope>IDENTIFICATION BY MASS SPECTROMETRY [LARGE SCALE ANALYSIS]</scope>
    <source>
        <tissue>Brain</tissue>
        <tissue>Embryo</tissue>
    </source>
</reference>
<feature type="chain" id="PRO_0000252403" description="G-protein-signaling modulator 1">
    <location>
        <begin position="1"/>
        <end position="673"/>
    </location>
</feature>
<feature type="repeat" description="TPR 1">
    <location>
        <begin position="28"/>
        <end position="61"/>
    </location>
</feature>
<feature type="repeat" description="TPR 2">
    <location>
        <begin position="66"/>
        <end position="99"/>
    </location>
</feature>
<feature type="repeat" description="TPR 3">
    <location>
        <begin position="106"/>
        <end position="139"/>
    </location>
</feature>
<feature type="repeat" description="TPR 4">
    <location>
        <begin position="146"/>
        <end position="178"/>
    </location>
</feature>
<feature type="repeat" description="TPR 5">
    <location>
        <begin position="180"/>
        <end position="199"/>
    </location>
</feature>
<feature type="repeat" description="TPR 6">
    <location>
        <begin position="206"/>
        <end position="239"/>
    </location>
</feature>
<feature type="repeat" description="TPR 7">
    <location>
        <begin position="246"/>
        <end position="279"/>
    </location>
</feature>
<feature type="repeat" description="TPR 8">
    <location>
        <begin position="286"/>
        <end position="319"/>
    </location>
</feature>
<feature type="repeat" description="TPR 9">
    <location>
        <begin position="326"/>
        <end position="359"/>
    </location>
</feature>
<feature type="domain" description="GoLoco 1" evidence="4">
    <location>
        <begin position="493"/>
        <end position="515"/>
    </location>
</feature>
<feature type="domain" description="GoLoco 2" evidence="4">
    <location>
        <begin position="546"/>
        <end position="568"/>
    </location>
</feature>
<feature type="domain" description="GoLoco 3" evidence="4">
    <location>
        <begin position="594"/>
        <end position="616"/>
    </location>
</feature>
<feature type="domain" description="GoLoco 4" evidence="4">
    <location>
        <begin position="628"/>
        <end position="650"/>
    </location>
</feature>
<feature type="region of interest" description="Mediates association with membranes" evidence="1">
    <location>
        <begin position="1"/>
        <end position="507"/>
    </location>
</feature>
<feature type="region of interest" description="Interaction with STK11/LKB1" evidence="1">
    <location>
        <begin position="361"/>
        <end position="485"/>
    </location>
</feature>
<feature type="region of interest" description="Disordered" evidence="5">
    <location>
        <begin position="420"/>
        <end position="475"/>
    </location>
</feature>
<feature type="region of interest" description="Disordered" evidence="5">
    <location>
        <begin position="508"/>
        <end position="531"/>
    </location>
</feature>
<feature type="region of interest" description="Disordered" evidence="5">
    <location>
        <begin position="644"/>
        <end position="673"/>
    </location>
</feature>
<feature type="compositionally biased region" description="Basic and acidic residues" evidence="5">
    <location>
        <begin position="420"/>
        <end position="439"/>
    </location>
</feature>
<feature type="compositionally biased region" description="Basic and acidic residues" evidence="5">
    <location>
        <begin position="451"/>
        <end position="467"/>
    </location>
</feature>
<feature type="compositionally biased region" description="Low complexity" evidence="5">
    <location>
        <begin position="516"/>
        <end position="528"/>
    </location>
</feature>
<feature type="compositionally biased region" description="Polar residues" evidence="5">
    <location>
        <begin position="664"/>
        <end position="673"/>
    </location>
</feature>
<feature type="modified residue" description="Phosphoserine" evidence="12">
    <location>
        <position position="410"/>
    </location>
</feature>
<feature type="modified residue" description="Omega-N-methylarginine" evidence="13">
    <location>
        <position position="418"/>
    </location>
</feature>
<feature type="modified residue" description="Phosphoserine" evidence="2">
    <location>
        <position position="442"/>
    </location>
</feature>
<feature type="modified residue" description="Phosphoserine" evidence="2">
    <location>
        <position position="467"/>
    </location>
</feature>
<feature type="modified residue" description="Phosphoserine" evidence="2">
    <location>
        <position position="469"/>
    </location>
</feature>
<feature type="modified residue" description="Phosphoserine" evidence="12">
    <location>
        <position position="490"/>
    </location>
</feature>
<feature type="modified residue" description="Phosphoserine" evidence="12">
    <location>
        <position position="491"/>
    </location>
</feature>
<feature type="modified residue" description="Phosphoserine" evidence="3">
    <location>
        <position position="543"/>
    </location>
</feature>
<feature type="modified residue" description="Phosphoserine" evidence="3">
    <location>
        <position position="567"/>
    </location>
</feature>
<feature type="modified residue" description="Phosphoserine" evidence="11">
    <location>
        <position position="653"/>
    </location>
</feature>
<feature type="splice variant" id="VSP_039029" description="In isoform 3." evidence="10">
    <location>
        <begin position="1"/>
        <end position="23"/>
    </location>
</feature>
<feature type="splice variant" id="VSP_039030" description="In isoform 4 and isoform 5." evidence="8">
    <original>MASPAPPVAEELPGPASRRLYS</original>
    <variation>MLASAMEGQPLALSLAEKAVCKVVYGAPRPRPLLLPVGLELWLYVQKMRNLQRK</variation>
    <location>
        <begin position="1"/>
        <end position="22"/>
    </location>
</feature>
<feature type="splice variant" id="VSP_039031" description="In isoform 4." evidence="8">
    <original>NLGNAHIFLGRFDVAAEHYKK</original>
    <variation>QPYPTLDSVGSRLSTVAMIPQ</variation>
    <location>
        <begin position="251"/>
        <end position="271"/>
    </location>
</feature>
<feature type="splice variant" id="VSP_039032" description="In isoform 4." evidence="8">
    <location>
        <begin position="272"/>
        <end position="673"/>
    </location>
</feature>
<feature type="splice variant" id="VSP_039033" description="In isoform 2." evidence="9">
    <location>
        <begin position="424"/>
        <end position="483"/>
    </location>
</feature>
<feature type="sequence conflict" description="In Ref. 6; AAB00119." evidence="10" ref="6">
    <original>C</original>
    <variation>Y</variation>
    <location>
        <position position="668"/>
    </location>
</feature>
<gene>
    <name type="primary">Gpsm1</name>
    <name type="synonym">Ags3</name>
    <name type="ORF">C10a</name>
</gene>
<comment type="function">
    <text evidence="7">Guanine nucleotide dissociation inhibitor (GDI) which functions as a receptor-independent activator of heterotrimeric G-protein signaling. Keeps G(i/o) alpha subunit in its GDP-bound form thus uncoupling heterotrimeric G-proteins signaling from G protein-coupled receptors. Controls spindle orientation and asymmetric cell fate of cerebral cortical progenitors. May also be involved in macroautophagy in intestinal cells. May play a role in drug addiction.</text>
</comment>
<comment type="subunit">
    <text evidence="1 6 7">Interacts with GNAI1 and GNAI2 preferentially in their GDP-bound state. May also interact with GNAO1. Interacts with INSC/inscuteable and FRMPD1 (By similarity). Interacts with GNAI3. Interacts with STK11/LKB1 and MACF1.</text>
</comment>
<comment type="subcellular location">
    <subcellularLocation>
        <location>Cytoplasm</location>
        <location>Cytosol</location>
    </subcellularLocation>
    <subcellularLocation>
        <location>Endoplasmic reticulum membrane</location>
        <topology>Peripheral membrane protein</topology>
        <orientation>Cytoplasmic side</orientation>
    </subcellularLocation>
    <subcellularLocation>
        <location evidence="1">Golgi apparatus membrane</location>
        <topology evidence="1">Peripheral membrane protein</topology>
        <orientation evidence="1">Cytoplasmic side</orientation>
    </subcellularLocation>
    <subcellularLocation>
        <location evidence="1">Cell membrane</location>
        <topology evidence="1">Peripheral membrane protein</topology>
        <orientation evidence="1">Cytoplasmic side</orientation>
    </subcellularLocation>
</comment>
<comment type="alternative products">
    <event type="alternative splicing"/>
    <isoform>
        <id>Q6IR34-1</id>
        <name>1</name>
        <sequence type="displayed"/>
    </isoform>
    <isoform>
        <id>Q6IR34-2</id>
        <name>2</name>
        <sequence type="described" ref="VSP_039033"/>
    </isoform>
    <isoform>
        <id>Q6IR34-3</id>
        <name>3</name>
        <sequence type="described" ref="VSP_039029"/>
    </isoform>
    <isoform>
        <id>Q6IR34-4</id>
        <name>4</name>
        <sequence type="described" ref="VSP_039030 VSP_039031 VSP_039032"/>
    </isoform>
    <isoform>
        <id>Q6IR34-5</id>
        <name>5</name>
        <sequence type="described" ref="VSP_039030"/>
    </isoform>
</comment>
<comment type="tissue specificity">
    <text evidence="7">Expressed in neural progenitor cells (at protein level).</text>
</comment>
<comment type="developmental stage">
    <text evidence="7">Expressed in brain at 14 dpc.</text>
</comment>
<comment type="domain">
    <text evidence="1">The GoLoco domains are essential for the GDI activity toward G(i/o) alpha. The GoLoco domains mediate interaction with G(i/o) alpha (By similarity).</text>
</comment>
<comment type="PTM">
    <text evidence="6">Phosphorylation regulates interaction with G(i/o) alpha.</text>
</comment>
<comment type="similarity">
    <text evidence="10">Belongs to the GPSM family.</text>
</comment>
<comment type="sequence caution" evidence="10">
    <conflict type="erroneous initiation">
        <sequence resource="EMBL-CDS" id="AAH26486"/>
    </conflict>
    <text>Truncated N-terminus.</text>
</comment>
<comment type="sequence caution" evidence="10">
    <conflict type="erroneous initiation">
        <sequence resource="EMBL-CDS" id="AAH71197"/>
    </conflict>
    <text>Truncated N-terminus.</text>
</comment>
<sequence length="673" mass="74362">MASPAPPVAEELPGPASRRLYSRMEASCLELALEGERLCKAGDFKAGVAFFEAAVQVGTEDLKTLSAIYSQLGNAYFYLKEYARALQFHKHDLLLARTIGDRMGEAKASGNLGNTLKVLGRFDEAIVCCQRHLDIAQEQGDKVGEARALYNIGNVYHAKGKQLSWNAAQDPGHLPPDVRETLHRASEFYERNLSLVKELGDRAAQGRAYGNLGNTHYLLGNFTEATTFHKERLAIAKEFGDKAAERRAYSNLGNAHIFLGRFDVAAEHYKKTLQLSRQLRDQAVEAQACYSLGNTYTLLQDYERAAEYHLRHLVIAQELADRVGEGRACWSLGNAYVSMGSPAQALTFAKKHLQISQEIGDRNGELTARMNIAHLQLALGRLTSPAAAEKPDLAGYEAQGARPKRTQRLSAETWDLLRLPLDREQNGETHHTGDWRGPGRDSLPLPMRSRKYQEGPDAIERRPREGSHSPLDSADVRVQVPRTGIPRAPSSDEECFFDLLSKFQSSRMDDQRCPLEEGQAGAAEATAAPSVEDRAAQSSVTASPQTEEFFDLIASSQSRRLDDQRASVGSLPGLRITLNNVGHLRGDGDAQEPGDEFFNMLIKYQSSRIDDQRCPPPDVLPRGPTMPDEDFFSLIQRVQAKRMDEQRVDLAGSPEQEASGLPDPQQQCPPGAS</sequence>
<organism>
    <name type="scientific">Mus musculus</name>
    <name type="common">Mouse</name>
    <dbReference type="NCBI Taxonomy" id="10090"/>
    <lineage>
        <taxon>Eukaryota</taxon>
        <taxon>Metazoa</taxon>
        <taxon>Chordata</taxon>
        <taxon>Craniata</taxon>
        <taxon>Vertebrata</taxon>
        <taxon>Euteleostomi</taxon>
        <taxon>Mammalia</taxon>
        <taxon>Eutheria</taxon>
        <taxon>Euarchontoglires</taxon>
        <taxon>Glires</taxon>
        <taxon>Rodentia</taxon>
        <taxon>Myomorpha</taxon>
        <taxon>Muroidea</taxon>
        <taxon>Muridae</taxon>
        <taxon>Murinae</taxon>
        <taxon>Mus</taxon>
        <taxon>Mus</taxon>
    </lineage>
</organism>
<accession>Q6IR34</accession>
<accession>A2AIX7</accession>
<accession>A2AIX8</accession>
<accession>A2AIX9</accession>
<accession>Q61366</accession>
<accession>Q8BUK4</accession>
<accession>Q8BX78</accession>
<accession>Q8R0R9</accession>
<protein>
    <recommendedName>
        <fullName>G-protein-signaling modulator 1</fullName>
    </recommendedName>
    <alternativeName>
        <fullName>Activator of G-protein signaling 3</fullName>
    </alternativeName>
</protein>
<name>GPSM1_MOUSE</name>
<proteinExistence type="evidence at protein level"/>
<evidence type="ECO:0000250" key="1"/>
<evidence type="ECO:0000250" key="2">
    <source>
        <dbReference type="UniProtKB" id="Q86YR5"/>
    </source>
</evidence>
<evidence type="ECO:0000250" key="3">
    <source>
        <dbReference type="UniProtKB" id="Q9R080"/>
    </source>
</evidence>
<evidence type="ECO:0000255" key="4">
    <source>
        <dbReference type="PROSITE-ProRule" id="PRU00097"/>
    </source>
</evidence>
<evidence type="ECO:0000256" key="5">
    <source>
        <dbReference type="SAM" id="MobiDB-lite"/>
    </source>
</evidence>
<evidence type="ECO:0000269" key="6">
    <source>
    </source>
</evidence>
<evidence type="ECO:0000269" key="7">
    <source>
    </source>
</evidence>
<evidence type="ECO:0000303" key="8">
    <source>
    </source>
</evidence>
<evidence type="ECO:0000303" key="9">
    <source>
    </source>
</evidence>
<evidence type="ECO:0000305" key="10"/>
<evidence type="ECO:0007744" key="11">
    <source>
    </source>
</evidence>
<evidence type="ECO:0007744" key="12">
    <source>
    </source>
</evidence>
<evidence type="ECO:0007744" key="13">
    <source>
    </source>
</evidence>
<dbReference type="EMBL" id="AK048691">
    <property type="protein sequence ID" value="BAC33422.1"/>
    <property type="molecule type" value="mRNA"/>
</dbReference>
<dbReference type="EMBL" id="AK084631">
    <property type="protein sequence ID" value="BAC39236.1"/>
    <property type="molecule type" value="mRNA"/>
</dbReference>
<dbReference type="EMBL" id="AL732541">
    <property type="status" value="NOT_ANNOTATED_CDS"/>
    <property type="molecule type" value="Genomic_DNA"/>
</dbReference>
<dbReference type="EMBL" id="CH466542">
    <property type="protein sequence ID" value="EDL08301.1"/>
    <property type="molecule type" value="Genomic_DNA"/>
</dbReference>
<dbReference type="EMBL" id="CH466542">
    <property type="protein sequence ID" value="EDL08300.1"/>
    <property type="molecule type" value="Genomic_DNA"/>
</dbReference>
<dbReference type="EMBL" id="BC026486">
    <property type="protein sequence ID" value="AAH26486.1"/>
    <property type="status" value="ALT_INIT"/>
    <property type="molecule type" value="mRNA"/>
</dbReference>
<dbReference type="EMBL" id="BC071197">
    <property type="protein sequence ID" value="AAH71197.1"/>
    <property type="status" value="ALT_INIT"/>
    <property type="molecule type" value="mRNA"/>
</dbReference>
<dbReference type="EMBL" id="L23316">
    <property type="protein sequence ID" value="AAB00119.1"/>
    <property type="molecule type" value="mRNA"/>
</dbReference>
<dbReference type="CCDS" id="CCDS15800.1">
    <molecule id="Q6IR34-1"/>
</dbReference>
<dbReference type="CCDS" id="CCDS57158.1">
    <molecule id="Q6IR34-2"/>
</dbReference>
<dbReference type="CCDS" id="CCDS57159.1">
    <molecule id="Q6IR34-5"/>
</dbReference>
<dbReference type="RefSeq" id="NP_001186075.1">
    <molecule id="Q6IR34-2"/>
    <property type="nucleotide sequence ID" value="NM_001199146.1"/>
</dbReference>
<dbReference type="RefSeq" id="NP_001186076.1">
    <molecule id="Q6IR34-5"/>
    <property type="nucleotide sequence ID" value="NM_001199147.1"/>
</dbReference>
<dbReference type="RefSeq" id="NP_001342503.1">
    <molecule id="Q6IR34-3"/>
    <property type="nucleotide sequence ID" value="NM_001355574.1"/>
</dbReference>
<dbReference type="RefSeq" id="NP_700459.2">
    <molecule id="Q6IR34-1"/>
    <property type="nucleotide sequence ID" value="NM_153410.5"/>
</dbReference>
<dbReference type="RefSeq" id="XP_006498316.1">
    <property type="nucleotide sequence ID" value="XM_006498253.3"/>
</dbReference>
<dbReference type="SMR" id="Q6IR34"/>
<dbReference type="BioGRID" id="212469">
    <property type="interactions" value="13"/>
</dbReference>
<dbReference type="CORUM" id="Q6IR34"/>
<dbReference type="FunCoup" id="Q6IR34">
    <property type="interactions" value="722"/>
</dbReference>
<dbReference type="IntAct" id="Q6IR34">
    <property type="interactions" value="13"/>
</dbReference>
<dbReference type="MINT" id="Q6IR34"/>
<dbReference type="STRING" id="10090.ENSMUSP00000067964"/>
<dbReference type="GlyGen" id="Q6IR34">
    <property type="glycosylation" value="2 sites, 1 N-linked glycan (1 site), 1 O-linked glycan (1 site)"/>
</dbReference>
<dbReference type="iPTMnet" id="Q6IR34"/>
<dbReference type="PhosphoSitePlus" id="Q6IR34"/>
<dbReference type="SwissPalm" id="Q6IR34"/>
<dbReference type="jPOST" id="Q6IR34"/>
<dbReference type="PaxDb" id="10090-ENSMUSP00000065000"/>
<dbReference type="PeptideAtlas" id="Q6IR34"/>
<dbReference type="ProteomicsDB" id="271074">
    <molecule id="Q6IR34-1"/>
</dbReference>
<dbReference type="ProteomicsDB" id="271075">
    <molecule id="Q6IR34-2"/>
</dbReference>
<dbReference type="ProteomicsDB" id="271076">
    <molecule id="Q6IR34-3"/>
</dbReference>
<dbReference type="ProteomicsDB" id="271077">
    <molecule id="Q6IR34-4"/>
</dbReference>
<dbReference type="ProteomicsDB" id="271078">
    <molecule id="Q6IR34-5"/>
</dbReference>
<dbReference type="Pumba" id="Q6IR34"/>
<dbReference type="Antibodypedia" id="32122">
    <property type="antibodies" value="208 antibodies from 27 providers"/>
</dbReference>
<dbReference type="DNASU" id="67839"/>
<dbReference type="Ensembl" id="ENSMUST00000066889.13">
    <molecule id="Q6IR34-5"/>
    <property type="protein sequence ID" value="ENSMUSP00000067964.7"/>
    <property type="gene ID" value="ENSMUSG00000026930.16"/>
</dbReference>
<dbReference type="Ensembl" id="ENSMUST00000066936.9">
    <molecule id="Q6IR34-1"/>
    <property type="protein sequence ID" value="ENSMUSP00000065000.3"/>
    <property type="gene ID" value="ENSMUSG00000026930.16"/>
</dbReference>
<dbReference type="Ensembl" id="ENSMUST00000078616.12">
    <molecule id="Q6IR34-2"/>
    <property type="protein sequence ID" value="ENSMUSP00000077686.6"/>
    <property type="gene ID" value="ENSMUSG00000026930.16"/>
</dbReference>
<dbReference type="GeneID" id="67839"/>
<dbReference type="KEGG" id="mmu:67839"/>
<dbReference type="UCSC" id="uc008iun.2">
    <molecule id="Q6IR34-1"/>
    <property type="organism name" value="mouse"/>
</dbReference>
<dbReference type="UCSC" id="uc008iuo.2">
    <molecule id="Q6IR34-2"/>
    <property type="organism name" value="mouse"/>
</dbReference>
<dbReference type="UCSC" id="uc008iup.2">
    <molecule id="Q6IR34-5"/>
    <property type="organism name" value="mouse"/>
</dbReference>
<dbReference type="AGR" id="MGI:1915089"/>
<dbReference type="CTD" id="26086"/>
<dbReference type="MGI" id="MGI:1915089">
    <property type="gene designation" value="Gpsm1"/>
</dbReference>
<dbReference type="VEuPathDB" id="HostDB:ENSMUSG00000026930"/>
<dbReference type="eggNOG" id="KOG1130">
    <property type="taxonomic scope" value="Eukaryota"/>
</dbReference>
<dbReference type="GeneTree" id="ENSGT00940000154667"/>
<dbReference type="HOGENOM" id="CLU_012445_1_0_1"/>
<dbReference type="InParanoid" id="Q6IR34"/>
<dbReference type="OMA" id="HANIANC"/>
<dbReference type="OrthoDB" id="44594at9989"/>
<dbReference type="PhylomeDB" id="Q6IR34"/>
<dbReference type="TreeFam" id="TF328344"/>
<dbReference type="Reactome" id="R-MMU-418594">
    <property type="pathway name" value="G alpha (i) signalling events"/>
</dbReference>
<dbReference type="BioGRID-ORCS" id="67839">
    <property type="hits" value="0 hits in 81 CRISPR screens"/>
</dbReference>
<dbReference type="ChiTaRS" id="Gpsm1">
    <property type="organism name" value="mouse"/>
</dbReference>
<dbReference type="PRO" id="PR:Q6IR34"/>
<dbReference type="Proteomes" id="UP000000589">
    <property type="component" value="Chromosome 2"/>
</dbReference>
<dbReference type="RNAct" id="Q6IR34">
    <property type="molecule type" value="protein"/>
</dbReference>
<dbReference type="Bgee" id="ENSMUSG00000026930">
    <property type="expression patterns" value="Expressed in rostral migratory stream and 245 other cell types or tissues"/>
</dbReference>
<dbReference type="ExpressionAtlas" id="Q6IR34">
    <property type="expression patterns" value="baseline and differential"/>
</dbReference>
<dbReference type="GO" id="GO:0005829">
    <property type="term" value="C:cytosol"/>
    <property type="evidence" value="ECO:0007669"/>
    <property type="project" value="UniProtKB-SubCell"/>
</dbReference>
<dbReference type="GO" id="GO:0005789">
    <property type="term" value="C:endoplasmic reticulum membrane"/>
    <property type="evidence" value="ECO:0007669"/>
    <property type="project" value="UniProtKB-SubCell"/>
</dbReference>
<dbReference type="GO" id="GO:0000139">
    <property type="term" value="C:Golgi membrane"/>
    <property type="evidence" value="ECO:0007669"/>
    <property type="project" value="UniProtKB-SubCell"/>
</dbReference>
<dbReference type="GO" id="GO:0005654">
    <property type="term" value="C:nucleoplasm"/>
    <property type="evidence" value="ECO:0007669"/>
    <property type="project" value="Ensembl"/>
</dbReference>
<dbReference type="GO" id="GO:0005886">
    <property type="term" value="C:plasma membrane"/>
    <property type="evidence" value="ECO:0007669"/>
    <property type="project" value="UniProtKB-SubCell"/>
</dbReference>
<dbReference type="GO" id="GO:0030695">
    <property type="term" value="F:GTPase regulator activity"/>
    <property type="evidence" value="ECO:0007669"/>
    <property type="project" value="InterPro"/>
</dbReference>
<dbReference type="GO" id="GO:0030154">
    <property type="term" value="P:cell differentiation"/>
    <property type="evidence" value="ECO:0007669"/>
    <property type="project" value="UniProtKB-KW"/>
</dbReference>
<dbReference type="GO" id="GO:0007399">
    <property type="term" value="P:nervous system development"/>
    <property type="evidence" value="ECO:0007669"/>
    <property type="project" value="UniProtKB-KW"/>
</dbReference>
<dbReference type="FunFam" id="1.25.40.10:FF:000145">
    <property type="entry name" value="G-protein-signaling modulator 1 isoform X2"/>
    <property type="match status" value="1"/>
</dbReference>
<dbReference type="FunFam" id="1.25.40.10:FF:000043">
    <property type="entry name" value="G-protein-signaling modulator 2 isoform X1"/>
    <property type="match status" value="1"/>
</dbReference>
<dbReference type="Gene3D" id="1.25.40.10">
    <property type="entry name" value="Tetratricopeptide repeat domain"/>
    <property type="match status" value="3"/>
</dbReference>
<dbReference type="InterPro" id="IPR003109">
    <property type="entry name" value="GoLoco_motif"/>
</dbReference>
<dbReference type="InterPro" id="IPR052386">
    <property type="entry name" value="GPSM"/>
</dbReference>
<dbReference type="InterPro" id="IPR011990">
    <property type="entry name" value="TPR-like_helical_dom_sf"/>
</dbReference>
<dbReference type="InterPro" id="IPR019734">
    <property type="entry name" value="TPR_rpt"/>
</dbReference>
<dbReference type="PANTHER" id="PTHR45954:SF2">
    <property type="entry name" value="G-PROTEIN-SIGNALING MODULATOR 1"/>
    <property type="match status" value="1"/>
</dbReference>
<dbReference type="PANTHER" id="PTHR45954">
    <property type="entry name" value="LD33695P"/>
    <property type="match status" value="1"/>
</dbReference>
<dbReference type="Pfam" id="PF02188">
    <property type="entry name" value="GoLoco"/>
    <property type="match status" value="4"/>
</dbReference>
<dbReference type="Pfam" id="PF13374">
    <property type="entry name" value="TPR_10"/>
    <property type="match status" value="1"/>
</dbReference>
<dbReference type="Pfam" id="PF13424">
    <property type="entry name" value="TPR_12"/>
    <property type="match status" value="3"/>
</dbReference>
<dbReference type="SMART" id="SM00390">
    <property type="entry name" value="GoLoco"/>
    <property type="match status" value="4"/>
</dbReference>
<dbReference type="SMART" id="SM00028">
    <property type="entry name" value="TPR"/>
    <property type="match status" value="6"/>
</dbReference>
<dbReference type="SUPFAM" id="SSF48452">
    <property type="entry name" value="TPR-like"/>
    <property type="match status" value="2"/>
</dbReference>
<dbReference type="PROSITE" id="PS50877">
    <property type="entry name" value="GOLOCO"/>
    <property type="match status" value="4"/>
</dbReference>
<dbReference type="PROSITE" id="PS50005">
    <property type="entry name" value="TPR"/>
    <property type="match status" value="6"/>
</dbReference>
<dbReference type="PROSITE" id="PS50293">
    <property type="entry name" value="TPR_REGION"/>
    <property type="match status" value="2"/>
</dbReference>
<keyword id="KW-0025">Alternative splicing</keyword>
<keyword id="KW-1003">Cell membrane</keyword>
<keyword id="KW-0963">Cytoplasm</keyword>
<keyword id="KW-0217">Developmental protein</keyword>
<keyword id="KW-0221">Differentiation</keyword>
<keyword id="KW-0903">Direct protein sequencing</keyword>
<keyword id="KW-0256">Endoplasmic reticulum</keyword>
<keyword id="KW-0333">Golgi apparatus</keyword>
<keyword id="KW-0472">Membrane</keyword>
<keyword id="KW-0488">Methylation</keyword>
<keyword id="KW-0524">Neurogenesis</keyword>
<keyword id="KW-0597">Phosphoprotein</keyword>
<keyword id="KW-1185">Reference proteome</keyword>
<keyword id="KW-0677">Repeat</keyword>
<keyword id="KW-0802">TPR repeat</keyword>